<dbReference type="EC" id="7.1.1.-" evidence="1"/>
<dbReference type="EMBL" id="CT971583">
    <property type="protein sequence ID" value="CAK24700.1"/>
    <property type="molecule type" value="Genomic_DNA"/>
</dbReference>
<dbReference type="SMR" id="A5GP35"/>
<dbReference type="STRING" id="32051.SynWH7803_2274"/>
<dbReference type="KEGG" id="syx:SynWH7803_2274"/>
<dbReference type="eggNOG" id="ENOG5031AQM">
    <property type="taxonomic scope" value="Bacteria"/>
</dbReference>
<dbReference type="HOGENOM" id="CLU_137431_0_0_3"/>
<dbReference type="OrthoDB" id="461686at2"/>
<dbReference type="Proteomes" id="UP000001566">
    <property type="component" value="Chromosome"/>
</dbReference>
<dbReference type="GO" id="GO:0031676">
    <property type="term" value="C:plasma membrane-derived thylakoid membrane"/>
    <property type="evidence" value="ECO:0007669"/>
    <property type="project" value="UniProtKB-SubCell"/>
</dbReference>
<dbReference type="GO" id="GO:0016655">
    <property type="term" value="F:oxidoreductase activity, acting on NAD(P)H, quinone or similar compound as acceptor"/>
    <property type="evidence" value="ECO:0007669"/>
    <property type="project" value="UniProtKB-UniRule"/>
</dbReference>
<dbReference type="GO" id="GO:0048038">
    <property type="term" value="F:quinone binding"/>
    <property type="evidence" value="ECO:0007669"/>
    <property type="project" value="UniProtKB-KW"/>
</dbReference>
<dbReference type="HAMAP" id="MF_01352">
    <property type="entry name" value="NDH1_NDH1M"/>
    <property type="match status" value="1"/>
</dbReference>
<dbReference type="InterPro" id="IPR018922">
    <property type="entry name" value="NdhM"/>
</dbReference>
<dbReference type="PANTHER" id="PTHR36900">
    <property type="entry name" value="NAD(P)H-QUINONE OXIDOREDUCTASE SUBUNIT M, CHLOROPLASTIC"/>
    <property type="match status" value="1"/>
</dbReference>
<dbReference type="PANTHER" id="PTHR36900:SF1">
    <property type="entry name" value="NAD(P)H-QUINONE OXIDOREDUCTASE SUBUNIT M, CHLOROPLASTIC"/>
    <property type="match status" value="1"/>
</dbReference>
<dbReference type="Pfam" id="PF10664">
    <property type="entry name" value="NdhM"/>
    <property type="match status" value="1"/>
</dbReference>
<evidence type="ECO:0000255" key="1">
    <source>
        <dbReference type="HAMAP-Rule" id="MF_01352"/>
    </source>
</evidence>
<gene>
    <name evidence="1" type="primary">ndhM</name>
    <name type="ordered locus">SynWH7803_2274</name>
</gene>
<protein>
    <recommendedName>
        <fullName evidence="1">NAD(P)H-quinone oxidoreductase subunit M</fullName>
        <ecNumber evidence="1">7.1.1.-</ecNumber>
    </recommendedName>
    <alternativeName>
        <fullName evidence="1">NAD(P)H dehydrogenase I subunit M</fullName>
        <shortName evidence="1">NDH-1 subunit M</shortName>
        <shortName evidence="1">NDH-M</shortName>
    </alternativeName>
</protein>
<reference key="1">
    <citation type="submission" date="2006-05" db="EMBL/GenBank/DDBJ databases">
        <authorList>
            <consortium name="Genoscope"/>
        </authorList>
    </citation>
    <scope>NUCLEOTIDE SEQUENCE [LARGE SCALE GENOMIC DNA]</scope>
    <source>
        <strain>WH7803</strain>
    </source>
</reference>
<comment type="function">
    <text evidence="1">NDH-1 shuttles electrons from an unknown electron donor, via FMN and iron-sulfur (Fe-S) centers, to quinones in the respiratory and/or the photosynthetic chain. The immediate electron acceptor for the enzyme in this species is believed to be plastoquinone. Couples the redox reaction to proton translocation, and thus conserves the redox energy in a proton gradient. Cyanobacterial NDH-1 also plays a role in inorganic carbon-concentration.</text>
</comment>
<comment type="catalytic activity">
    <reaction evidence="1">
        <text>a plastoquinone + NADH + (n+1) H(+)(in) = a plastoquinol + NAD(+) + n H(+)(out)</text>
        <dbReference type="Rhea" id="RHEA:42608"/>
        <dbReference type="Rhea" id="RHEA-COMP:9561"/>
        <dbReference type="Rhea" id="RHEA-COMP:9562"/>
        <dbReference type="ChEBI" id="CHEBI:15378"/>
        <dbReference type="ChEBI" id="CHEBI:17757"/>
        <dbReference type="ChEBI" id="CHEBI:57540"/>
        <dbReference type="ChEBI" id="CHEBI:57945"/>
        <dbReference type="ChEBI" id="CHEBI:62192"/>
    </reaction>
</comment>
<comment type="catalytic activity">
    <reaction evidence="1">
        <text>a plastoquinone + NADPH + (n+1) H(+)(in) = a plastoquinol + NADP(+) + n H(+)(out)</text>
        <dbReference type="Rhea" id="RHEA:42612"/>
        <dbReference type="Rhea" id="RHEA-COMP:9561"/>
        <dbReference type="Rhea" id="RHEA-COMP:9562"/>
        <dbReference type="ChEBI" id="CHEBI:15378"/>
        <dbReference type="ChEBI" id="CHEBI:17757"/>
        <dbReference type="ChEBI" id="CHEBI:57783"/>
        <dbReference type="ChEBI" id="CHEBI:58349"/>
        <dbReference type="ChEBI" id="CHEBI:62192"/>
    </reaction>
</comment>
<comment type="subunit">
    <text evidence="1">NDH-1 can be composed of about 15 different subunits; different subcomplexes with different compositions have been identified which probably have different functions.</text>
</comment>
<comment type="subcellular location">
    <subcellularLocation>
        <location evidence="1">Cellular thylakoid membrane</location>
        <topology evidence="1">Peripheral membrane protein</topology>
        <orientation evidence="1">Cytoplasmic side</orientation>
    </subcellularLocation>
</comment>
<comment type="similarity">
    <text evidence="1">Belongs to the complex I NdhM subunit family.</text>
</comment>
<accession>A5GP35</accession>
<name>NDHM_SYNPW</name>
<keyword id="KW-0472">Membrane</keyword>
<keyword id="KW-0520">NAD</keyword>
<keyword id="KW-0521">NADP</keyword>
<keyword id="KW-0618">Plastoquinone</keyword>
<keyword id="KW-0874">Quinone</keyword>
<keyword id="KW-1185">Reference proteome</keyword>
<keyword id="KW-0793">Thylakoid</keyword>
<keyword id="KW-1278">Translocase</keyword>
<keyword id="KW-0813">Transport</keyword>
<sequence length="115" mass="13130">MAETLLKSTTRHIRLFTARVENGDLVPDPEQLTLDLDPDNEFLWTEGTVTTIQTRFRDLVESYAGQPLNDYNLRRIGTELEGSIRELLQAGSLTYNPDCRVMNYSMGLPRTPELL</sequence>
<organism>
    <name type="scientific">Synechococcus sp. (strain WH7803)</name>
    <dbReference type="NCBI Taxonomy" id="32051"/>
    <lineage>
        <taxon>Bacteria</taxon>
        <taxon>Bacillati</taxon>
        <taxon>Cyanobacteriota</taxon>
        <taxon>Cyanophyceae</taxon>
        <taxon>Synechococcales</taxon>
        <taxon>Synechococcaceae</taxon>
        <taxon>Synechococcus</taxon>
    </lineage>
</organism>
<proteinExistence type="inferred from homology"/>
<feature type="chain" id="PRO_0000352207" description="NAD(P)H-quinone oxidoreductase subunit M">
    <location>
        <begin position="1"/>
        <end position="115"/>
    </location>
</feature>